<keyword id="KW-0002">3D-structure</keyword>
<keyword id="KW-0903">Direct protein sequencing</keyword>
<keyword id="KW-1185">Reference proteome</keyword>
<keyword id="KW-0687">Ribonucleoprotein</keyword>
<keyword id="KW-0689">Ribosomal protein</keyword>
<keyword id="KW-0694">RNA-binding</keyword>
<keyword id="KW-0699">rRNA-binding</keyword>
<organism>
    <name type="scientific">Thermus thermophilus (strain ATCC 27634 / DSM 579 / HB8)</name>
    <dbReference type="NCBI Taxonomy" id="300852"/>
    <lineage>
        <taxon>Bacteria</taxon>
        <taxon>Thermotogati</taxon>
        <taxon>Deinococcota</taxon>
        <taxon>Deinococci</taxon>
        <taxon>Thermales</taxon>
        <taxon>Thermaceae</taxon>
        <taxon>Thermus</taxon>
    </lineage>
</organism>
<protein>
    <recommendedName>
        <fullName evidence="3">Large ribosomal subunit protein uL22</fullName>
    </recommendedName>
    <alternativeName>
        <fullName>50S ribosomal protein L22</fullName>
    </alternativeName>
</protein>
<name>RL22_THET8</name>
<accession>Q5SHP3</accession>
<sequence length="113" mass="12780">MEAKAIARYVRISPRKVRLVVDLIRGKSLEEARNILRYTNKRGAYFVAKVLESAAANAVNNHDMLEDRLYVKAAYVDEGPALKRVLPRARGRADIIKKRTSHITVILGEKHGK</sequence>
<comment type="function">
    <text evidence="1">This protein binds specifically to 23S rRNA; its binding is stimulated by other ribosomal proteins, e.g. L4, L17, and L20. It is important during the early stages of 50S assembly. It makes multiple contacts with different domains of the 23S rRNA in the assembled 50S subunit and ribosome (By similarity).</text>
</comment>
<comment type="function">
    <text>The globular domain of the protein is one of the proteins that surrounds the polypeptide exit tunnel on the outside of the subunit, while an extended beta-hairpin is found that penetrates into the center of the 70S ribosome. This extension seems to form part of the wall of the exit tunnel.</text>
</comment>
<comment type="subunit">
    <text>Part of the 50S ribosomal subunit.</text>
</comment>
<comment type="mass spectrometry" mass="12781.0" method="MALDI" evidence="2"/>
<comment type="similarity">
    <text evidence="3">Belongs to the universal ribosomal protein uL22 family.</text>
</comment>
<dbReference type="EMBL" id="AP008226">
    <property type="protein sequence ID" value="BAD71510.1"/>
    <property type="molecule type" value="Genomic_DNA"/>
</dbReference>
<dbReference type="RefSeq" id="WP_011173710.1">
    <property type="nucleotide sequence ID" value="NC_006461.1"/>
</dbReference>
<dbReference type="RefSeq" id="YP_144953.1">
    <property type="nucleotide sequence ID" value="NC_006461.1"/>
</dbReference>
<dbReference type="PDB" id="1ML5">
    <property type="method" value="EM"/>
    <property type="resolution" value="14.00 A"/>
    <property type="chains" value="s=1-113"/>
</dbReference>
<dbReference type="PDB" id="1VVJ">
    <property type="method" value="X-ray"/>
    <property type="resolution" value="3.44 A"/>
    <property type="chains" value="RW/YW=1-113"/>
</dbReference>
<dbReference type="PDB" id="1VY4">
    <property type="method" value="X-ray"/>
    <property type="resolution" value="2.60 A"/>
    <property type="chains" value="BW/DW=1-113"/>
</dbReference>
<dbReference type="PDB" id="1VY5">
    <property type="method" value="X-ray"/>
    <property type="resolution" value="2.55 A"/>
    <property type="chains" value="BW/DW=1-113"/>
</dbReference>
<dbReference type="PDB" id="1VY6">
    <property type="method" value="X-ray"/>
    <property type="resolution" value="2.90 A"/>
    <property type="chains" value="BW/DW=1-113"/>
</dbReference>
<dbReference type="PDB" id="1VY7">
    <property type="method" value="X-ray"/>
    <property type="resolution" value="2.80 A"/>
    <property type="chains" value="BW/DW=1-113"/>
</dbReference>
<dbReference type="PDB" id="4L47">
    <property type="method" value="X-ray"/>
    <property type="resolution" value="3.22 A"/>
    <property type="chains" value="RW/YW=1-113"/>
</dbReference>
<dbReference type="PDB" id="4L71">
    <property type="method" value="X-ray"/>
    <property type="resolution" value="3.90 A"/>
    <property type="chains" value="RW/YW=1-113"/>
</dbReference>
<dbReference type="PDB" id="4LEL">
    <property type="method" value="X-ray"/>
    <property type="resolution" value="3.90 A"/>
    <property type="chains" value="RW/YW=1-113"/>
</dbReference>
<dbReference type="PDB" id="4LFZ">
    <property type="method" value="X-ray"/>
    <property type="resolution" value="3.92 A"/>
    <property type="chains" value="RW/YW=1-113"/>
</dbReference>
<dbReference type="PDB" id="4LNT">
    <property type="method" value="X-ray"/>
    <property type="resolution" value="2.94 A"/>
    <property type="chains" value="RW/YW=1-113"/>
</dbReference>
<dbReference type="PDB" id="4LSK">
    <property type="method" value="X-ray"/>
    <property type="resolution" value="3.48 A"/>
    <property type="chains" value="RW/YW=1-113"/>
</dbReference>
<dbReference type="PDB" id="4LT8">
    <property type="method" value="X-ray"/>
    <property type="resolution" value="3.14 A"/>
    <property type="chains" value="RW/YW=1-113"/>
</dbReference>
<dbReference type="PDB" id="4P6F">
    <property type="method" value="X-ray"/>
    <property type="resolution" value="3.60 A"/>
    <property type="chains" value="RW/YW=1-113"/>
</dbReference>
<dbReference type="PDB" id="4P70">
    <property type="method" value="X-ray"/>
    <property type="resolution" value="3.68 A"/>
    <property type="chains" value="RW/YW=1-113"/>
</dbReference>
<dbReference type="PDB" id="4TUA">
    <property type="method" value="X-ray"/>
    <property type="resolution" value="3.60 A"/>
    <property type="chains" value="RW/YW=1-113"/>
</dbReference>
<dbReference type="PDB" id="4TUB">
    <property type="method" value="X-ray"/>
    <property type="resolution" value="3.60 A"/>
    <property type="chains" value="RW/YW=1-113"/>
</dbReference>
<dbReference type="PDB" id="4TUC">
    <property type="method" value="X-ray"/>
    <property type="resolution" value="3.60 A"/>
    <property type="chains" value="RW/YW=1-113"/>
</dbReference>
<dbReference type="PDB" id="4TUD">
    <property type="method" value="X-ray"/>
    <property type="resolution" value="3.60 A"/>
    <property type="chains" value="RW/YW=1-113"/>
</dbReference>
<dbReference type="PDB" id="4TUE">
    <property type="method" value="X-ray"/>
    <property type="resolution" value="3.50 A"/>
    <property type="chains" value="RW/YW=1-113"/>
</dbReference>
<dbReference type="PDB" id="4V42">
    <property type="method" value="X-ray"/>
    <property type="resolution" value="5.50 A"/>
    <property type="chains" value="BS=1-113"/>
</dbReference>
<dbReference type="PDB" id="4V4P">
    <property type="method" value="X-ray"/>
    <property type="resolution" value="5.50 A"/>
    <property type="chains" value="AS=1-113"/>
</dbReference>
<dbReference type="PDB" id="4V4R">
    <property type="method" value="X-ray"/>
    <property type="resolution" value="5.90 A"/>
    <property type="chains" value="BW=1-113"/>
</dbReference>
<dbReference type="PDB" id="4V4S">
    <property type="method" value="X-ray"/>
    <property type="resolution" value="6.76 A"/>
    <property type="chains" value="BW=1-113"/>
</dbReference>
<dbReference type="PDB" id="4V4T">
    <property type="method" value="X-ray"/>
    <property type="resolution" value="6.46 A"/>
    <property type="chains" value="BW=1-113"/>
</dbReference>
<dbReference type="PDB" id="4V4X">
    <property type="method" value="X-ray"/>
    <property type="resolution" value="5.00 A"/>
    <property type="chains" value="BV=1-113"/>
</dbReference>
<dbReference type="PDB" id="4V4Y">
    <property type="method" value="X-ray"/>
    <property type="resolution" value="5.50 A"/>
    <property type="chains" value="BV=1-113"/>
</dbReference>
<dbReference type="PDB" id="4V4Z">
    <property type="method" value="X-ray"/>
    <property type="resolution" value="4.51 A"/>
    <property type="chains" value="BV=1-113"/>
</dbReference>
<dbReference type="PDB" id="4V51">
    <property type="method" value="X-ray"/>
    <property type="resolution" value="2.80 A"/>
    <property type="chains" value="BW/DW=1-113"/>
</dbReference>
<dbReference type="PDB" id="4V5A">
    <property type="method" value="X-ray"/>
    <property type="resolution" value="3.50 A"/>
    <property type="chains" value="BW/DW=1-113"/>
</dbReference>
<dbReference type="PDB" id="4V5C">
    <property type="method" value="X-ray"/>
    <property type="resolution" value="3.30 A"/>
    <property type="chains" value="BW/DW=1-113"/>
</dbReference>
<dbReference type="PDB" id="4V5D">
    <property type="method" value="X-ray"/>
    <property type="resolution" value="3.50 A"/>
    <property type="chains" value="BW/DW=1-113"/>
</dbReference>
<dbReference type="PDB" id="4V5E">
    <property type="method" value="X-ray"/>
    <property type="resolution" value="3.45 A"/>
    <property type="chains" value="BW/DW=1-113"/>
</dbReference>
<dbReference type="PDB" id="4V5F">
    <property type="method" value="X-ray"/>
    <property type="resolution" value="3.60 A"/>
    <property type="chains" value="BW/DW=1-113"/>
</dbReference>
<dbReference type="PDB" id="4V5G">
    <property type="method" value="X-ray"/>
    <property type="resolution" value="3.60 A"/>
    <property type="chains" value="BW/DW=1-113"/>
</dbReference>
<dbReference type="PDB" id="4V5J">
    <property type="method" value="X-ray"/>
    <property type="resolution" value="3.10 A"/>
    <property type="chains" value="BW/DW=1-113"/>
</dbReference>
<dbReference type="PDB" id="4V5K">
    <property type="method" value="X-ray"/>
    <property type="resolution" value="3.20 A"/>
    <property type="chains" value="BW/DW=1-113"/>
</dbReference>
<dbReference type="PDB" id="4V5L">
    <property type="method" value="X-ray"/>
    <property type="resolution" value="3.10 A"/>
    <property type="chains" value="BW=1-113"/>
</dbReference>
<dbReference type="PDB" id="4V5M">
    <property type="method" value="EM"/>
    <property type="resolution" value="7.80 A"/>
    <property type="chains" value="BW=1-113"/>
</dbReference>
<dbReference type="PDB" id="4V5N">
    <property type="method" value="EM"/>
    <property type="resolution" value="7.60 A"/>
    <property type="chains" value="BW=1-113"/>
</dbReference>
<dbReference type="PDB" id="4V5P">
    <property type="method" value="X-ray"/>
    <property type="resolution" value="3.10 A"/>
    <property type="chains" value="BW/DW=1-113"/>
</dbReference>
<dbReference type="PDB" id="4V5Q">
    <property type="method" value="X-ray"/>
    <property type="resolution" value="3.10 A"/>
    <property type="chains" value="BW/DW=1-113"/>
</dbReference>
<dbReference type="PDB" id="4V5R">
    <property type="method" value="X-ray"/>
    <property type="resolution" value="3.10 A"/>
    <property type="chains" value="BW/DW=1-113"/>
</dbReference>
<dbReference type="PDB" id="4V5S">
    <property type="method" value="X-ray"/>
    <property type="resolution" value="3.10 A"/>
    <property type="chains" value="BW/DW=1-113"/>
</dbReference>
<dbReference type="PDB" id="4V68">
    <property type="method" value="EM"/>
    <property type="resolution" value="6.40 A"/>
    <property type="chains" value="BW=1-113"/>
</dbReference>
<dbReference type="PDB" id="4V6A">
    <property type="method" value="X-ray"/>
    <property type="resolution" value="3.10 A"/>
    <property type="chains" value="BW/DW=1-113"/>
</dbReference>
<dbReference type="PDB" id="4V6F">
    <property type="method" value="X-ray"/>
    <property type="resolution" value="3.10 A"/>
    <property type="chains" value="AS/DS=1-113"/>
</dbReference>
<dbReference type="PDB" id="4V6G">
    <property type="method" value="X-ray"/>
    <property type="resolution" value="3.50 A"/>
    <property type="chains" value="BS/DS=1-113"/>
</dbReference>
<dbReference type="PDB" id="4V7J">
    <property type="method" value="X-ray"/>
    <property type="resolution" value="3.30 A"/>
    <property type="chains" value="AW/BW=1-113"/>
</dbReference>
<dbReference type="PDB" id="4V7K">
    <property type="method" value="X-ray"/>
    <property type="resolution" value="3.60 A"/>
    <property type="chains" value="AW/BW=1-113"/>
</dbReference>
<dbReference type="PDB" id="4V7L">
    <property type="method" value="X-ray"/>
    <property type="resolution" value="3.00 A"/>
    <property type="chains" value="BW/DW=1-113"/>
</dbReference>
<dbReference type="PDB" id="4V7M">
    <property type="method" value="X-ray"/>
    <property type="resolution" value="3.45 A"/>
    <property type="chains" value="BW/DW=1-113"/>
</dbReference>
<dbReference type="PDB" id="4V7W">
    <property type="method" value="X-ray"/>
    <property type="resolution" value="3.00 A"/>
    <property type="chains" value="BW/DW=1-113"/>
</dbReference>
<dbReference type="PDB" id="4V7X">
    <property type="method" value="X-ray"/>
    <property type="resolution" value="3.00 A"/>
    <property type="chains" value="BW/DW=1-113"/>
</dbReference>
<dbReference type="PDB" id="4V7Y">
    <property type="method" value="X-ray"/>
    <property type="resolution" value="3.00 A"/>
    <property type="chains" value="BW/DW=1-113"/>
</dbReference>
<dbReference type="PDB" id="4V7Z">
    <property type="method" value="X-ray"/>
    <property type="resolution" value="3.10 A"/>
    <property type="chains" value="BW/DW=1-113"/>
</dbReference>
<dbReference type="PDB" id="4V87">
    <property type="method" value="X-ray"/>
    <property type="resolution" value="3.10 A"/>
    <property type="chains" value="AS/DS=1-113"/>
</dbReference>
<dbReference type="PDB" id="4V8A">
    <property type="method" value="X-ray"/>
    <property type="resolution" value="3.20 A"/>
    <property type="chains" value="AW/BW=1-113"/>
</dbReference>
<dbReference type="PDB" id="4V8B">
    <property type="method" value="X-ray"/>
    <property type="resolution" value="3.00 A"/>
    <property type="chains" value="BS/DS=1-113"/>
</dbReference>
<dbReference type="PDB" id="4V8C">
    <property type="method" value="X-ray"/>
    <property type="resolution" value="3.30 A"/>
    <property type="chains" value="AS/BS=1-113"/>
</dbReference>
<dbReference type="PDB" id="4V8D">
    <property type="method" value="X-ray"/>
    <property type="resolution" value="3.00 A"/>
    <property type="chains" value="BS/DS=1-113"/>
</dbReference>
<dbReference type="PDB" id="4V8E">
    <property type="method" value="X-ray"/>
    <property type="resolution" value="3.30 A"/>
    <property type="chains" value="AS/CS=1-113"/>
</dbReference>
<dbReference type="PDB" id="4V8F">
    <property type="method" value="X-ray"/>
    <property type="resolution" value="3.30 A"/>
    <property type="chains" value="AS/DS=1-113"/>
</dbReference>
<dbReference type="PDB" id="4V8G">
    <property type="method" value="X-ray"/>
    <property type="resolution" value="3.00 A"/>
    <property type="chains" value="BW/DW=1-113"/>
</dbReference>
<dbReference type="PDB" id="4V8H">
    <property type="method" value="X-ray"/>
    <property type="resolution" value="3.10 A"/>
    <property type="chains" value="BW/DW=1-113"/>
</dbReference>
<dbReference type="PDB" id="4V8I">
    <property type="method" value="X-ray"/>
    <property type="resolution" value="2.70 A"/>
    <property type="chains" value="BW/DW=1-113"/>
</dbReference>
<dbReference type="PDB" id="4V8J">
    <property type="method" value="X-ray"/>
    <property type="resolution" value="3.90 A"/>
    <property type="chains" value="BW/DW=1-113"/>
</dbReference>
<dbReference type="PDB" id="4V8N">
    <property type="method" value="X-ray"/>
    <property type="resolution" value="3.10 A"/>
    <property type="chains" value="BW/DW=1-113"/>
</dbReference>
<dbReference type="PDB" id="4V8O">
    <property type="method" value="X-ray"/>
    <property type="resolution" value="3.80 A"/>
    <property type="chains" value="BW=1-113"/>
</dbReference>
<dbReference type="PDB" id="4V8Q">
    <property type="method" value="X-ray"/>
    <property type="resolution" value="3.10 A"/>
    <property type="chains" value="AW=1-113"/>
</dbReference>
<dbReference type="PDB" id="4V8U">
    <property type="method" value="X-ray"/>
    <property type="resolution" value="3.70 A"/>
    <property type="chains" value="BW/DW=1-113"/>
</dbReference>
<dbReference type="PDB" id="4V8X">
    <property type="method" value="X-ray"/>
    <property type="resolution" value="3.35 A"/>
    <property type="chains" value="BW/DW=1-113"/>
</dbReference>
<dbReference type="PDB" id="4V90">
    <property type="method" value="X-ray"/>
    <property type="resolution" value="2.95 A"/>
    <property type="chains" value="BW=1-113"/>
</dbReference>
<dbReference type="PDB" id="4V95">
    <property type="method" value="X-ray"/>
    <property type="resolution" value="3.20 A"/>
    <property type="chains" value="BW/DW=1-113"/>
</dbReference>
<dbReference type="PDB" id="4V97">
    <property type="method" value="X-ray"/>
    <property type="resolution" value="3.52 A"/>
    <property type="chains" value="BW/DW=1-113"/>
</dbReference>
<dbReference type="PDB" id="4V9A">
    <property type="method" value="X-ray"/>
    <property type="resolution" value="3.30 A"/>
    <property type="chains" value="BS/DS=1-113"/>
</dbReference>
<dbReference type="PDB" id="4V9B">
    <property type="method" value="X-ray"/>
    <property type="resolution" value="3.10 A"/>
    <property type="chains" value="BS/DS=1-113"/>
</dbReference>
<dbReference type="PDB" id="4V9H">
    <property type="method" value="X-ray"/>
    <property type="resolution" value="2.86 A"/>
    <property type="chains" value="BW=1-113"/>
</dbReference>
<dbReference type="PDB" id="4V9I">
    <property type="method" value="X-ray"/>
    <property type="resolution" value="3.30 A"/>
    <property type="chains" value="BW/DW=1-112"/>
</dbReference>
<dbReference type="PDB" id="4V9R">
    <property type="method" value="X-ray"/>
    <property type="resolution" value="3.00 A"/>
    <property type="chains" value="BW/DW=1-113"/>
</dbReference>
<dbReference type="PDB" id="4V9S">
    <property type="method" value="X-ray"/>
    <property type="resolution" value="3.10 A"/>
    <property type="chains" value="BW/DW=1-113"/>
</dbReference>
<dbReference type="PDB" id="4W2E">
    <property type="method" value="X-ray"/>
    <property type="resolution" value="2.90 A"/>
    <property type="chains" value="W=1-113"/>
</dbReference>
<dbReference type="PDB" id="4W2F">
    <property type="method" value="X-ray"/>
    <property type="resolution" value="2.40 A"/>
    <property type="chains" value="BW/DW=1-113"/>
</dbReference>
<dbReference type="PDB" id="4W2G">
    <property type="method" value="X-ray"/>
    <property type="resolution" value="2.55 A"/>
    <property type="chains" value="BW/DW=1-113"/>
</dbReference>
<dbReference type="PDB" id="4W2H">
    <property type="method" value="X-ray"/>
    <property type="resolution" value="2.70 A"/>
    <property type="chains" value="BW/DW=1-113"/>
</dbReference>
<dbReference type="PDB" id="4W2I">
    <property type="method" value="X-ray"/>
    <property type="resolution" value="2.70 A"/>
    <property type="chains" value="BW/DW=1-113"/>
</dbReference>
<dbReference type="PDB" id="4W4G">
    <property type="method" value="X-ray"/>
    <property type="resolution" value="3.30 A"/>
    <property type="chains" value="RW/YW=1-113"/>
</dbReference>
<dbReference type="PDB" id="4WPO">
    <property type="method" value="X-ray"/>
    <property type="resolution" value="2.80 A"/>
    <property type="chains" value="AW/CW=1-113"/>
</dbReference>
<dbReference type="PDB" id="4WQ1">
    <property type="method" value="X-ray"/>
    <property type="resolution" value="3.10 A"/>
    <property type="chains" value="A5/E8=1-113"/>
</dbReference>
<dbReference type="PDB" id="4WQF">
    <property type="method" value="X-ray"/>
    <property type="resolution" value="2.80 A"/>
    <property type="chains" value="AW/CW=1-113"/>
</dbReference>
<dbReference type="PDB" id="4WQR">
    <property type="method" value="X-ray"/>
    <property type="resolution" value="3.15 A"/>
    <property type="chains" value="A5/E8=1-113"/>
</dbReference>
<dbReference type="PDB" id="4WQU">
    <property type="method" value="X-ray"/>
    <property type="resolution" value="2.80 A"/>
    <property type="chains" value="AW/CW=1-113"/>
</dbReference>
<dbReference type="PDB" id="4WQY">
    <property type="method" value="X-ray"/>
    <property type="resolution" value="2.80 A"/>
    <property type="chains" value="AW/CW=1-113"/>
</dbReference>
<dbReference type="PDB" id="4WR6">
    <property type="method" value="X-ray"/>
    <property type="resolution" value="3.05 A"/>
    <property type="chains" value="A5/E8=1-113"/>
</dbReference>
<dbReference type="PDB" id="4WRA">
    <property type="method" value="X-ray"/>
    <property type="resolution" value="3.05 A"/>
    <property type="chains" value="A5/E8=1-113"/>
</dbReference>
<dbReference type="PDB" id="4WRO">
    <property type="method" value="X-ray"/>
    <property type="resolution" value="3.05 A"/>
    <property type="chains" value="E8=1-113"/>
</dbReference>
<dbReference type="PDB" id="4WSD">
    <property type="method" value="X-ray"/>
    <property type="resolution" value="2.95 A"/>
    <property type="chains" value="A5/E8=1-113"/>
</dbReference>
<dbReference type="PDB" id="4WSM">
    <property type="method" value="X-ray"/>
    <property type="resolution" value="3.30 A"/>
    <property type="chains" value="A5/E8=1-113"/>
</dbReference>
<dbReference type="PDB" id="4WT1">
    <property type="method" value="X-ray"/>
    <property type="resolution" value="3.05 A"/>
    <property type="chains" value="A5/E8=1-113"/>
</dbReference>
<dbReference type="PDB" id="4WT8">
    <property type="method" value="X-ray"/>
    <property type="resolution" value="3.40 A"/>
    <property type="chains" value="CW=1-113, DW=1-112"/>
</dbReference>
<dbReference type="PDB" id="4WU1">
    <property type="method" value="X-ray"/>
    <property type="resolution" value="3.20 A"/>
    <property type="chains" value="A5/E8=1-113"/>
</dbReference>
<dbReference type="PDB" id="4WZD">
    <property type="method" value="X-ray"/>
    <property type="resolution" value="3.10 A"/>
    <property type="chains" value="A5/E8=1-113"/>
</dbReference>
<dbReference type="PDB" id="4WZO">
    <property type="method" value="X-ray"/>
    <property type="resolution" value="3.30 A"/>
    <property type="chains" value="A5/E8=1-113"/>
</dbReference>
<dbReference type="PDB" id="4Y4O">
    <property type="method" value="X-ray"/>
    <property type="resolution" value="2.30 A"/>
    <property type="chains" value="1W/2W=1-113"/>
</dbReference>
<dbReference type="PDB" id="4Y4P">
    <property type="method" value="X-ray"/>
    <property type="resolution" value="2.50 A"/>
    <property type="chains" value="1W/2W=1-113"/>
</dbReference>
<dbReference type="PDB" id="4YPB">
    <property type="method" value="X-ray"/>
    <property type="resolution" value="3.40 A"/>
    <property type="chains" value="RW/YW=1-113"/>
</dbReference>
<dbReference type="PDB" id="4YZV">
    <property type="method" value="X-ray"/>
    <property type="resolution" value="3.10 A"/>
    <property type="chains" value="RW/YW=1-113"/>
</dbReference>
<dbReference type="PDB" id="4Z3S">
    <property type="method" value="X-ray"/>
    <property type="resolution" value="2.65 A"/>
    <property type="chains" value="1W/2W=1-113"/>
</dbReference>
<dbReference type="PDB" id="4Z8C">
    <property type="method" value="X-ray"/>
    <property type="resolution" value="2.90 A"/>
    <property type="chains" value="1W/2W=1-113"/>
</dbReference>
<dbReference type="PDB" id="4ZER">
    <property type="method" value="X-ray"/>
    <property type="resolution" value="3.10 A"/>
    <property type="chains" value="1W/2W=1-112"/>
</dbReference>
<dbReference type="PDB" id="4ZSN">
    <property type="method" value="X-ray"/>
    <property type="resolution" value="3.60 A"/>
    <property type="chains" value="RW/YW=1-113"/>
</dbReference>
<dbReference type="PDB" id="5A9Z">
    <property type="method" value="EM"/>
    <property type="resolution" value="4.70 A"/>
    <property type="chains" value="AT=1-110"/>
</dbReference>
<dbReference type="PDB" id="5AA0">
    <property type="method" value="EM"/>
    <property type="resolution" value="5.00 A"/>
    <property type="chains" value="AT=1-110"/>
</dbReference>
<dbReference type="PDB" id="5CZP">
    <property type="method" value="X-ray"/>
    <property type="resolution" value="3.30 A"/>
    <property type="chains" value="RW/YW=1-113"/>
</dbReference>
<dbReference type="PDB" id="5D8B">
    <property type="method" value="X-ray"/>
    <property type="resolution" value="3.63 A"/>
    <property type="chains" value="MB/Q=1-113"/>
</dbReference>
<dbReference type="PDB" id="5DFE">
    <property type="method" value="X-ray"/>
    <property type="resolution" value="3.10 A"/>
    <property type="chains" value="RW/YW=1-113"/>
</dbReference>
<dbReference type="PDB" id="5DOX">
    <property type="method" value="X-ray"/>
    <property type="resolution" value="3.10 A"/>
    <property type="chains" value="1W/2W=1-113"/>
</dbReference>
<dbReference type="PDB" id="5DOY">
    <property type="method" value="X-ray"/>
    <property type="resolution" value="2.60 A"/>
    <property type="chains" value="1W/2W=1-113"/>
</dbReference>
<dbReference type="PDB" id="5E7K">
    <property type="method" value="X-ray"/>
    <property type="resolution" value="3.20 A"/>
    <property type="chains" value="A5/E8=1-113"/>
</dbReference>
<dbReference type="PDB" id="5E81">
    <property type="method" value="X-ray"/>
    <property type="resolution" value="2.95 A"/>
    <property type="chains" value="A5/E8=1-113"/>
</dbReference>
<dbReference type="PDB" id="5EL4">
    <property type="method" value="X-ray"/>
    <property type="resolution" value="3.15 A"/>
    <property type="chains" value="A5/E8=1-113"/>
</dbReference>
<dbReference type="PDB" id="5EL5">
    <property type="method" value="X-ray"/>
    <property type="resolution" value="3.15 A"/>
    <property type="chains" value="A5/E8=1-113"/>
</dbReference>
<dbReference type="PDB" id="5EL6">
    <property type="method" value="X-ray"/>
    <property type="resolution" value="3.10 A"/>
    <property type="chains" value="A5/E8=1-113"/>
</dbReference>
<dbReference type="PDB" id="5EL7">
    <property type="method" value="X-ray"/>
    <property type="resolution" value="3.15 A"/>
    <property type="chains" value="A5/E8=1-113"/>
</dbReference>
<dbReference type="PDB" id="5F8K">
    <property type="method" value="X-ray"/>
    <property type="resolution" value="2.80 A"/>
    <property type="chains" value="1W/2W=1-112"/>
</dbReference>
<dbReference type="PDB" id="5FDU">
    <property type="method" value="X-ray"/>
    <property type="resolution" value="2.90 A"/>
    <property type="chains" value="1W/2W=1-112"/>
</dbReference>
<dbReference type="PDB" id="5FDV">
    <property type="method" value="X-ray"/>
    <property type="resolution" value="2.80 A"/>
    <property type="chains" value="1W/2W=1-112"/>
</dbReference>
<dbReference type="PDB" id="5HAU">
    <property type="method" value="X-ray"/>
    <property type="resolution" value="3.00 A"/>
    <property type="chains" value="1U/2U=1-113"/>
</dbReference>
<dbReference type="PDB" id="5HCP">
    <property type="method" value="X-ray"/>
    <property type="resolution" value="2.89 A"/>
    <property type="chains" value="1W/2W=1-113"/>
</dbReference>
<dbReference type="PDB" id="5HCQ">
    <property type="method" value="X-ray"/>
    <property type="resolution" value="2.80 A"/>
    <property type="chains" value="1W/2W=1-113"/>
</dbReference>
<dbReference type="PDB" id="5HCR">
    <property type="method" value="X-ray"/>
    <property type="resolution" value="2.80 A"/>
    <property type="chains" value="1W/2W=1-113"/>
</dbReference>
<dbReference type="PDB" id="5HD1">
    <property type="method" value="X-ray"/>
    <property type="resolution" value="2.70 A"/>
    <property type="chains" value="1W/2W=1-113"/>
</dbReference>
<dbReference type="PDB" id="5IB7">
    <property type="method" value="X-ray"/>
    <property type="resolution" value="2.99 A"/>
    <property type="chains" value="A5/E8=1-113"/>
</dbReference>
<dbReference type="PDB" id="5IB8">
    <property type="method" value="X-ray"/>
    <property type="resolution" value="3.13 A"/>
    <property type="chains" value="A5/E8=1-113"/>
</dbReference>
<dbReference type="PDB" id="5IBB">
    <property type="method" value="X-ray"/>
    <property type="resolution" value="2.96 A"/>
    <property type="chains" value="A5/E8=1-113"/>
</dbReference>
<dbReference type="PDB" id="5IMQ">
    <property type="method" value="EM"/>
    <property type="resolution" value="3.80 A"/>
    <property type="chains" value="o=1-113"/>
</dbReference>
<dbReference type="PDB" id="5IMR">
    <property type="method" value="EM"/>
    <property type="chains" value="o=1-113"/>
</dbReference>
<dbReference type="PDB" id="5J30">
    <property type="method" value="X-ray"/>
    <property type="resolution" value="3.20 A"/>
    <property type="chains" value="RW/YW=1-113"/>
</dbReference>
<dbReference type="PDB" id="5J3C">
    <property type="method" value="X-ray"/>
    <property type="resolution" value="3.04 A"/>
    <property type="chains" value="RW/YW=1-113"/>
</dbReference>
<dbReference type="PDB" id="5J4B">
    <property type="method" value="X-ray"/>
    <property type="resolution" value="2.60 A"/>
    <property type="chains" value="1W/2W=1-113"/>
</dbReference>
<dbReference type="PDB" id="5J4C">
    <property type="method" value="X-ray"/>
    <property type="resolution" value="2.80 A"/>
    <property type="chains" value="1W/2W=1-113"/>
</dbReference>
<dbReference type="PDB" id="5J8B">
    <property type="method" value="X-ray"/>
    <property type="resolution" value="2.60 A"/>
    <property type="chains" value="W=1-113"/>
</dbReference>
<dbReference type="PDB" id="5NDJ">
    <property type="method" value="X-ray"/>
    <property type="resolution" value="3.15 A"/>
    <property type="chains" value="A5/E8=1-113"/>
</dbReference>
<dbReference type="PDB" id="5NDK">
    <property type="method" value="X-ray"/>
    <property type="resolution" value="2.95 A"/>
    <property type="chains" value="A5/E8=1-113"/>
</dbReference>
<dbReference type="PDB" id="5OT7">
    <property type="method" value="EM"/>
    <property type="resolution" value="3.80 A"/>
    <property type="chains" value="x=1-113"/>
</dbReference>
<dbReference type="PDB" id="5UQ7">
    <property type="method" value="EM"/>
    <property type="resolution" value="3.50 A"/>
    <property type="chains" value="W=1-112"/>
</dbReference>
<dbReference type="PDB" id="5UQ8">
    <property type="method" value="EM"/>
    <property type="resolution" value="3.20 A"/>
    <property type="chains" value="W=1-112"/>
</dbReference>
<dbReference type="PDB" id="5VP2">
    <property type="method" value="X-ray"/>
    <property type="resolution" value="2.80 A"/>
    <property type="chains" value="1W/2W=1-113"/>
</dbReference>
<dbReference type="PDB" id="5VPO">
    <property type="method" value="X-ray"/>
    <property type="resolution" value="3.34 A"/>
    <property type="chains" value="RW/YW=1-113"/>
</dbReference>
<dbReference type="PDB" id="5VPP">
    <property type="method" value="X-ray"/>
    <property type="resolution" value="3.90 A"/>
    <property type="chains" value="RW/YW=1-113"/>
</dbReference>
<dbReference type="PDB" id="5W4K">
    <property type="method" value="X-ray"/>
    <property type="resolution" value="2.70 A"/>
    <property type="chains" value="1W/2W=1-113"/>
</dbReference>
<dbReference type="PDB" id="5WIS">
    <property type="method" value="X-ray"/>
    <property type="resolution" value="2.70 A"/>
    <property type="chains" value="1W/2W=1-113"/>
</dbReference>
<dbReference type="PDB" id="5WIT">
    <property type="method" value="X-ray"/>
    <property type="resolution" value="2.60 A"/>
    <property type="chains" value="1W/2W=1-113"/>
</dbReference>
<dbReference type="PDB" id="5ZLU">
    <property type="method" value="EM"/>
    <property type="resolution" value="3.60 A"/>
    <property type="chains" value="p=1-113"/>
</dbReference>
<dbReference type="PDB" id="6BUW">
    <property type="method" value="X-ray"/>
    <property type="resolution" value="3.50 A"/>
    <property type="chains" value="RW/YW=1-113"/>
</dbReference>
<dbReference type="PDB" id="6BZ6">
    <property type="method" value="X-ray"/>
    <property type="resolution" value="3.18 A"/>
    <property type="chains" value="RW/YW=1-113"/>
</dbReference>
<dbReference type="PDB" id="6BZ7">
    <property type="method" value="X-ray"/>
    <property type="resolution" value="3.68 A"/>
    <property type="chains" value="RW/YW=1-113"/>
</dbReference>
<dbReference type="PDB" id="6BZ8">
    <property type="method" value="X-ray"/>
    <property type="resolution" value="3.74 A"/>
    <property type="chains" value="RW/YW=1-113"/>
</dbReference>
<dbReference type="PDB" id="6C5L">
    <property type="method" value="X-ray"/>
    <property type="resolution" value="3.20 A"/>
    <property type="chains" value="BW/DW=1-113"/>
</dbReference>
<dbReference type="PDB" id="6CAE">
    <property type="method" value="X-ray"/>
    <property type="resolution" value="2.60 A"/>
    <property type="chains" value="1W/2W=1-113"/>
</dbReference>
<dbReference type="PDB" id="6CFJ">
    <property type="method" value="X-ray"/>
    <property type="resolution" value="2.80 A"/>
    <property type="chains" value="1W/2W=1-113"/>
</dbReference>
<dbReference type="PDB" id="6CFK">
    <property type="method" value="X-ray"/>
    <property type="resolution" value="2.70 A"/>
    <property type="chains" value="1W/2W=1-113"/>
</dbReference>
<dbReference type="PDB" id="6CFL">
    <property type="method" value="X-ray"/>
    <property type="resolution" value="2.60 A"/>
    <property type="chains" value="1W/2W=1-113"/>
</dbReference>
<dbReference type="PDB" id="6CZR">
    <property type="method" value="X-ray"/>
    <property type="resolution" value="3.14 A"/>
    <property type="chains" value="1W/2W=1-112"/>
</dbReference>
<dbReference type="PDB" id="6FKR">
    <property type="method" value="X-ray"/>
    <property type="resolution" value="3.20 A"/>
    <property type="chains" value="1W/2W=1-112"/>
</dbReference>
<dbReference type="PDB" id="6GSJ">
    <property type="method" value="X-ray"/>
    <property type="resolution" value="2.96 A"/>
    <property type="chains" value="A5/E8=1-113"/>
</dbReference>
<dbReference type="PDB" id="6GSK">
    <property type="method" value="X-ray"/>
    <property type="resolution" value="3.36 A"/>
    <property type="chains" value="A5/E8=1-113"/>
</dbReference>
<dbReference type="PDB" id="6GSL">
    <property type="method" value="X-ray"/>
    <property type="resolution" value="3.16 A"/>
    <property type="chains" value="A5/E8=1-113"/>
</dbReference>
<dbReference type="PDB" id="6GZQ">
    <property type="method" value="EM"/>
    <property type="resolution" value="3.28 A"/>
    <property type="chains" value="R1=1-113"/>
</dbReference>
<dbReference type="PDB" id="6GZX">
    <property type="method" value="EM"/>
    <property type="resolution" value="4.57 A"/>
    <property type="chains" value="R1/R2=1-113"/>
</dbReference>
<dbReference type="PDB" id="6GZZ">
    <property type="method" value="EM"/>
    <property type="resolution" value="4.13 A"/>
    <property type="chains" value="R1/R2=1-113"/>
</dbReference>
<dbReference type="PDB" id="6N9E">
    <property type="method" value="X-ray"/>
    <property type="resolution" value="3.70 A"/>
    <property type="chains" value="1W/2W=1-113"/>
</dbReference>
<dbReference type="PDB" id="6N9F">
    <property type="method" value="X-ray"/>
    <property type="resolution" value="3.70 A"/>
    <property type="chains" value="1W/2W=1-113"/>
</dbReference>
<dbReference type="PDB" id="6ND5">
    <property type="method" value="X-ray"/>
    <property type="resolution" value="2.60 A"/>
    <property type="chains" value="1W/2W=1-113"/>
</dbReference>
<dbReference type="PDB" id="6ND6">
    <property type="method" value="X-ray"/>
    <property type="resolution" value="2.85 A"/>
    <property type="chains" value="1W/2W=1-113"/>
</dbReference>
<dbReference type="PDB" id="6NDK">
    <property type="method" value="X-ray"/>
    <property type="resolution" value="3.64 A"/>
    <property type="chains" value="RW/YW=1-113"/>
</dbReference>
<dbReference type="PDB" id="6NSH">
    <property type="method" value="X-ray"/>
    <property type="resolution" value="3.40 A"/>
    <property type="chains" value="RW/YW=1-113"/>
</dbReference>
<dbReference type="PDB" id="6NTA">
    <property type="method" value="X-ray"/>
    <property type="resolution" value="3.10 A"/>
    <property type="chains" value="RW/YW=1-113"/>
</dbReference>
<dbReference type="PDB" id="6NUO">
    <property type="method" value="X-ray"/>
    <property type="resolution" value="3.20 A"/>
    <property type="chains" value="RW/YW=1-113"/>
</dbReference>
<dbReference type="PDB" id="6NWY">
    <property type="method" value="X-ray"/>
    <property type="resolution" value="3.50 A"/>
    <property type="chains" value="RW/YW=1-113"/>
</dbReference>
<dbReference type="PDB" id="6O3M">
    <property type="method" value="X-ray"/>
    <property type="resolution" value="3.97 A"/>
    <property type="chains" value="RW/YW=1-113"/>
</dbReference>
<dbReference type="PDB" id="6O97">
    <property type="method" value="X-ray"/>
    <property type="resolution" value="2.75 A"/>
    <property type="chains" value="1W/2W=1-113"/>
</dbReference>
<dbReference type="PDB" id="6OF1">
    <property type="method" value="X-ray"/>
    <property type="resolution" value="2.80 A"/>
    <property type="chains" value="1W/2W=1-113"/>
</dbReference>
<dbReference type="PDB" id="6OF6">
    <property type="method" value="X-ray"/>
    <property type="resolution" value="3.20 A"/>
    <property type="chains" value="RW/YW=1-113"/>
</dbReference>
<dbReference type="PDB" id="6OJ2">
    <property type="method" value="X-ray"/>
    <property type="resolution" value="3.20 A"/>
    <property type="chains" value="RW/YW=1-113"/>
</dbReference>
<dbReference type="PDB" id="6OPE">
    <property type="method" value="X-ray"/>
    <property type="resolution" value="3.10 A"/>
    <property type="chains" value="RW/YW=1-113"/>
</dbReference>
<dbReference type="PDB" id="6ORD">
    <property type="method" value="X-ray"/>
    <property type="resolution" value="3.10 A"/>
    <property type="chains" value="RW/YW=1-113"/>
</dbReference>
<dbReference type="PDB" id="6OSI">
    <property type="method" value="X-ray"/>
    <property type="resolution" value="4.14 A"/>
    <property type="chains" value="RW/YW=1-113"/>
</dbReference>
<dbReference type="PDB" id="6OTR">
    <property type="method" value="X-ray"/>
    <property type="resolution" value="3.12 A"/>
    <property type="chains" value="RW/YW=1-113"/>
</dbReference>
<dbReference type="PDB" id="6OXA">
    <property type="method" value="X-ray"/>
    <property type="resolution" value="3.25 A"/>
    <property type="chains" value="RW/YW=1-113"/>
</dbReference>
<dbReference type="PDB" id="6OXI">
    <property type="method" value="X-ray"/>
    <property type="resolution" value="3.50 A"/>
    <property type="chains" value="RW/YW=1-113"/>
</dbReference>
<dbReference type="PDB" id="6Q95">
    <property type="method" value="EM"/>
    <property type="resolution" value="3.70 A"/>
    <property type="chains" value="S=1-113"/>
</dbReference>
<dbReference type="PDB" id="6QNQ">
    <property type="method" value="X-ray"/>
    <property type="resolution" value="3.50 A"/>
    <property type="chains" value="A5/E8=1-113"/>
</dbReference>
<dbReference type="PDB" id="6QNR">
    <property type="method" value="X-ray"/>
    <property type="resolution" value="3.10 A"/>
    <property type="chains" value="A5/E8=1-113"/>
</dbReference>
<dbReference type="PDB" id="6UCQ">
    <property type="method" value="X-ray"/>
    <property type="resolution" value="3.50 A"/>
    <property type="chains" value="1W/2W=1-113"/>
</dbReference>
<dbReference type="PDB" id="6UO1">
    <property type="method" value="X-ray"/>
    <property type="resolution" value="2.95 A"/>
    <property type="chains" value="1W/2W=1-113"/>
</dbReference>
<dbReference type="PDB" id="6XHV">
    <property type="method" value="X-ray"/>
    <property type="resolution" value="2.40 A"/>
    <property type="chains" value="1W/2W=1-113"/>
</dbReference>
<dbReference type="PDB" id="6XHW">
    <property type="method" value="X-ray"/>
    <property type="resolution" value="2.50 A"/>
    <property type="chains" value="1W/2W=1-113"/>
</dbReference>
<dbReference type="PDB" id="6XHX">
    <property type="method" value="X-ray"/>
    <property type="resolution" value="2.55 A"/>
    <property type="chains" value="1W/2W=1-113"/>
</dbReference>
<dbReference type="PDB" id="6XHY">
    <property type="method" value="X-ray"/>
    <property type="resolution" value="2.60 A"/>
    <property type="chains" value="1W/2W=1-113"/>
</dbReference>
<dbReference type="PDB" id="6XQD">
    <property type="method" value="X-ray"/>
    <property type="resolution" value="2.80 A"/>
    <property type="chains" value="1W/2W=1-113"/>
</dbReference>
<dbReference type="PDB" id="6XQE">
    <property type="method" value="X-ray"/>
    <property type="resolution" value="3.00 A"/>
    <property type="chains" value="1W/2W=1-113"/>
</dbReference>
<dbReference type="PDB" id="7AZO">
    <property type="method" value="X-ray"/>
    <property type="resolution" value="3.30 A"/>
    <property type="chains" value="L22A/L22B=1-113"/>
</dbReference>
<dbReference type="PDB" id="7AZS">
    <property type="method" value="X-ray"/>
    <property type="resolution" value="3.10 A"/>
    <property type="chains" value="L22A/L22B=1-113"/>
</dbReference>
<dbReference type="PDB" id="7JQL">
    <property type="method" value="X-ray"/>
    <property type="resolution" value="3.00 A"/>
    <property type="chains" value="1W/2W=1-113"/>
</dbReference>
<dbReference type="PDB" id="7JQM">
    <property type="method" value="X-ray"/>
    <property type="resolution" value="3.05 A"/>
    <property type="chains" value="1W/2W=1-113"/>
</dbReference>
<dbReference type="PDB" id="7LH5">
    <property type="method" value="X-ray"/>
    <property type="resolution" value="3.27 A"/>
    <property type="chains" value="BW/DW=1-113"/>
</dbReference>
<dbReference type="PDB" id="7MD7">
    <property type="method" value="X-ray"/>
    <property type="resolution" value="2.80 A"/>
    <property type="chains" value="1W/2W=1-113"/>
</dbReference>
<dbReference type="PDB" id="7RQ8">
    <property type="method" value="X-ray"/>
    <property type="resolution" value="2.50 A"/>
    <property type="chains" value="1W/2W=1-113"/>
</dbReference>
<dbReference type="PDB" id="7RQ9">
    <property type="method" value="X-ray"/>
    <property type="resolution" value="2.60 A"/>
    <property type="chains" value="1W/2W=1-113"/>
</dbReference>
<dbReference type="PDB" id="7RQA">
    <property type="method" value="X-ray"/>
    <property type="resolution" value="2.40 A"/>
    <property type="chains" value="1W/2W=1-113"/>
</dbReference>
<dbReference type="PDB" id="7RQB">
    <property type="method" value="X-ray"/>
    <property type="resolution" value="2.45 A"/>
    <property type="chains" value="1W/2W=1-113"/>
</dbReference>
<dbReference type="PDB" id="7RQC">
    <property type="method" value="X-ray"/>
    <property type="resolution" value="2.50 A"/>
    <property type="chains" value="1W/2W=1-113"/>
</dbReference>
<dbReference type="PDB" id="7RQD">
    <property type="method" value="X-ray"/>
    <property type="resolution" value="2.50 A"/>
    <property type="chains" value="1W/2W=1-113"/>
</dbReference>
<dbReference type="PDB" id="7RQE">
    <property type="method" value="X-ray"/>
    <property type="resolution" value="2.40 A"/>
    <property type="chains" value="1W/2W=1-113"/>
</dbReference>
<dbReference type="PDB" id="7U2H">
    <property type="method" value="X-ray"/>
    <property type="resolution" value="2.55 A"/>
    <property type="chains" value="1W/2W=1-113"/>
</dbReference>
<dbReference type="PDB" id="7U2I">
    <property type="method" value="X-ray"/>
    <property type="resolution" value="2.55 A"/>
    <property type="chains" value="1W/2W=1-113"/>
</dbReference>
<dbReference type="PDB" id="7U2J">
    <property type="method" value="X-ray"/>
    <property type="resolution" value="2.55 A"/>
    <property type="chains" value="1W/2W=1-113"/>
</dbReference>
<dbReference type="PDB" id="8CVJ">
    <property type="method" value="X-ray"/>
    <property type="resolution" value="2.40 A"/>
    <property type="chains" value="1W/2W=1-113"/>
</dbReference>
<dbReference type="PDB" id="8CVK">
    <property type="method" value="X-ray"/>
    <property type="resolution" value="2.50 A"/>
    <property type="chains" value="1W/2W=1-113"/>
</dbReference>
<dbReference type="PDB" id="8CVL">
    <property type="method" value="X-ray"/>
    <property type="resolution" value="2.30 A"/>
    <property type="chains" value="1W/2W=1-113"/>
</dbReference>
<dbReference type="PDB" id="8EKB">
    <property type="method" value="X-ray"/>
    <property type="resolution" value="2.70 A"/>
    <property type="chains" value="1W/2W=1-113"/>
</dbReference>
<dbReference type="PDB" id="8EV6">
    <property type="method" value="X-ray"/>
    <property type="resolution" value="2.95 A"/>
    <property type="chains" value="1W/2W=1-113"/>
</dbReference>
<dbReference type="PDB" id="8EV7">
    <property type="method" value="X-ray"/>
    <property type="resolution" value="2.89 A"/>
    <property type="chains" value="1W/2W=1-113"/>
</dbReference>
<dbReference type="PDB" id="8FC1">
    <property type="method" value="X-ray"/>
    <property type="resolution" value="2.50 A"/>
    <property type="chains" value="1W/2W=1-113"/>
</dbReference>
<dbReference type="PDB" id="8FC2">
    <property type="method" value="X-ray"/>
    <property type="resolution" value="2.50 A"/>
    <property type="chains" value="1W/2W=1-113"/>
</dbReference>
<dbReference type="PDB" id="8FC3">
    <property type="method" value="X-ray"/>
    <property type="resolution" value="2.60 A"/>
    <property type="chains" value="1W/2W=1-113"/>
</dbReference>
<dbReference type="PDB" id="8FC4">
    <property type="method" value="X-ray"/>
    <property type="resolution" value="2.45 A"/>
    <property type="chains" value="1W/2W=1-113"/>
</dbReference>
<dbReference type="PDB" id="8FC5">
    <property type="method" value="X-ray"/>
    <property type="resolution" value="2.65 A"/>
    <property type="chains" value="1W/2W=1-113"/>
</dbReference>
<dbReference type="PDB" id="8FC6">
    <property type="method" value="X-ray"/>
    <property type="resolution" value="2.35 A"/>
    <property type="chains" value="1W/2W=1-113"/>
</dbReference>
<dbReference type="PDB" id="8FOM">
    <property type="method" value="X-ray"/>
    <property type="resolution" value="3.58 A"/>
    <property type="chains" value="RW/YW=1-113"/>
</dbReference>
<dbReference type="PDB" id="8FON">
    <property type="method" value="X-ray"/>
    <property type="resolution" value="3.64 A"/>
    <property type="chains" value="RW/YW=1-113"/>
</dbReference>
<dbReference type="PDB" id="8G29">
    <property type="method" value="X-ray"/>
    <property type="resolution" value="2.55 A"/>
    <property type="chains" value="1W/2W=1-113"/>
</dbReference>
<dbReference type="PDB" id="8G2A">
    <property type="method" value="X-ray"/>
    <property type="resolution" value="2.45 A"/>
    <property type="chains" value="1W/2W=1-113"/>
</dbReference>
<dbReference type="PDB" id="8G2B">
    <property type="method" value="X-ray"/>
    <property type="resolution" value="2.55 A"/>
    <property type="chains" value="1W/2W=1-113"/>
</dbReference>
<dbReference type="PDB" id="8G2C">
    <property type="method" value="X-ray"/>
    <property type="resolution" value="2.65 A"/>
    <property type="chains" value="1W/2W=1-113"/>
</dbReference>
<dbReference type="PDB" id="8G2D">
    <property type="method" value="X-ray"/>
    <property type="resolution" value="2.70 A"/>
    <property type="chains" value="1W/2W=1-113"/>
</dbReference>
<dbReference type="PDB" id="8T8B">
    <property type="method" value="X-ray"/>
    <property type="resolution" value="2.65 A"/>
    <property type="chains" value="1W/2W=1-113"/>
</dbReference>
<dbReference type="PDB" id="8T8C">
    <property type="method" value="X-ray"/>
    <property type="resolution" value="2.60 A"/>
    <property type="chains" value="1W/2W=1-113"/>
</dbReference>
<dbReference type="PDB" id="8UD6">
    <property type="method" value="X-ray"/>
    <property type="resolution" value="2.70 A"/>
    <property type="chains" value="1W/2W=1-113"/>
</dbReference>
<dbReference type="PDB" id="8UD7">
    <property type="method" value="X-ray"/>
    <property type="resolution" value="2.55 A"/>
    <property type="chains" value="1W/2W=1-113"/>
</dbReference>
<dbReference type="PDB" id="8UD8">
    <property type="method" value="X-ray"/>
    <property type="resolution" value="2.60 A"/>
    <property type="chains" value="1W/2W=1-113"/>
</dbReference>
<dbReference type="PDB" id="8UVR">
    <property type="method" value="X-ray"/>
    <property type="resolution" value="2.60 A"/>
    <property type="chains" value="1W/2W=1-113"/>
</dbReference>
<dbReference type="PDB" id="8UVS">
    <property type="method" value="X-ray"/>
    <property type="resolution" value="2.75 A"/>
    <property type="chains" value="1W/2W=1-113"/>
</dbReference>
<dbReference type="PDB" id="8VTU">
    <property type="method" value="X-ray"/>
    <property type="resolution" value="2.40 A"/>
    <property type="chains" value="1W/2W=1-113"/>
</dbReference>
<dbReference type="PDB" id="8VTV">
    <property type="method" value="X-ray"/>
    <property type="resolution" value="2.55 A"/>
    <property type="chains" value="1W/2W=1-113"/>
</dbReference>
<dbReference type="PDB" id="8VTW">
    <property type="method" value="X-ray"/>
    <property type="resolution" value="2.35 A"/>
    <property type="chains" value="1W/2W=1-113"/>
</dbReference>
<dbReference type="PDB" id="8VTX">
    <property type="method" value="X-ray"/>
    <property type="resolution" value="2.40 A"/>
    <property type="chains" value="1W/2W=1-113"/>
</dbReference>
<dbReference type="PDB" id="8VTY">
    <property type="method" value="X-ray"/>
    <property type="resolution" value="2.60 A"/>
    <property type="chains" value="1W/2W=1-113"/>
</dbReference>
<dbReference type="PDB" id="8WV1">
    <property type="method" value="X-ray"/>
    <property type="resolution" value="3.99 A"/>
    <property type="chains" value="R/r=1-113"/>
</dbReference>
<dbReference type="PDB" id="9B00">
    <property type="method" value="X-ray"/>
    <property type="resolution" value="2.80 A"/>
    <property type="chains" value="1W/2W=1-113"/>
</dbReference>
<dbReference type="PDB" id="9D0J">
    <property type="method" value="X-ray"/>
    <property type="resolution" value="2.50 A"/>
    <property type="chains" value="1W/2W=1-113"/>
</dbReference>
<dbReference type="PDB" id="9D7R">
    <property type="method" value="X-ray"/>
    <property type="resolution" value="2.70 A"/>
    <property type="chains" value="1W/2W=1-113"/>
</dbReference>
<dbReference type="PDB" id="9D7S">
    <property type="method" value="X-ray"/>
    <property type="resolution" value="2.85 A"/>
    <property type="chains" value="1W/2W=1-113"/>
</dbReference>
<dbReference type="PDB" id="9D7T">
    <property type="method" value="X-ray"/>
    <property type="resolution" value="2.70 A"/>
    <property type="chains" value="1W/2W=1-113"/>
</dbReference>
<dbReference type="PDB" id="9DFC">
    <property type="method" value="X-ray"/>
    <property type="resolution" value="2.50 A"/>
    <property type="chains" value="1W/2W=1-113"/>
</dbReference>
<dbReference type="PDB" id="9DFD">
    <property type="method" value="X-ray"/>
    <property type="resolution" value="2.60 A"/>
    <property type="chains" value="1W/2W=1-113"/>
</dbReference>
<dbReference type="PDB" id="9DFE">
    <property type="method" value="X-ray"/>
    <property type="resolution" value="2.60 A"/>
    <property type="chains" value="1W/2W=1-113"/>
</dbReference>
<dbReference type="PDBsum" id="1ML5"/>
<dbReference type="PDBsum" id="1VVJ"/>
<dbReference type="PDBsum" id="1VY4"/>
<dbReference type="PDBsum" id="1VY5"/>
<dbReference type="PDBsum" id="1VY6"/>
<dbReference type="PDBsum" id="1VY7"/>
<dbReference type="PDBsum" id="4L47"/>
<dbReference type="PDBsum" id="4L71"/>
<dbReference type="PDBsum" id="4LEL"/>
<dbReference type="PDBsum" id="4LFZ"/>
<dbReference type="PDBsum" id="4LNT"/>
<dbReference type="PDBsum" id="4LSK"/>
<dbReference type="PDBsum" id="4LT8"/>
<dbReference type="PDBsum" id="4P6F"/>
<dbReference type="PDBsum" id="4P70"/>
<dbReference type="PDBsum" id="4TUA"/>
<dbReference type="PDBsum" id="4TUB"/>
<dbReference type="PDBsum" id="4TUC"/>
<dbReference type="PDBsum" id="4TUD"/>
<dbReference type="PDBsum" id="4TUE"/>
<dbReference type="PDBsum" id="4V42"/>
<dbReference type="PDBsum" id="4V4P"/>
<dbReference type="PDBsum" id="4V4R"/>
<dbReference type="PDBsum" id="4V4S"/>
<dbReference type="PDBsum" id="4V4T"/>
<dbReference type="PDBsum" id="4V4X"/>
<dbReference type="PDBsum" id="4V4Y"/>
<dbReference type="PDBsum" id="4V4Z"/>
<dbReference type="PDBsum" id="4V51"/>
<dbReference type="PDBsum" id="4V5A"/>
<dbReference type="PDBsum" id="4V5C"/>
<dbReference type="PDBsum" id="4V5D"/>
<dbReference type="PDBsum" id="4V5E"/>
<dbReference type="PDBsum" id="4V5F"/>
<dbReference type="PDBsum" id="4V5G"/>
<dbReference type="PDBsum" id="4V5J"/>
<dbReference type="PDBsum" id="4V5K"/>
<dbReference type="PDBsum" id="4V5L"/>
<dbReference type="PDBsum" id="4V5M"/>
<dbReference type="PDBsum" id="4V5N"/>
<dbReference type="PDBsum" id="4V5P"/>
<dbReference type="PDBsum" id="4V5Q"/>
<dbReference type="PDBsum" id="4V5R"/>
<dbReference type="PDBsum" id="4V5S"/>
<dbReference type="PDBsum" id="4V68"/>
<dbReference type="PDBsum" id="4V6A"/>
<dbReference type="PDBsum" id="4V6F"/>
<dbReference type="PDBsum" id="4V6G"/>
<dbReference type="PDBsum" id="4V7J"/>
<dbReference type="PDBsum" id="4V7K"/>
<dbReference type="PDBsum" id="4V7L"/>
<dbReference type="PDBsum" id="4V7M"/>
<dbReference type="PDBsum" id="4V7W"/>
<dbReference type="PDBsum" id="4V7X"/>
<dbReference type="PDBsum" id="4V7Y"/>
<dbReference type="PDBsum" id="4V7Z"/>
<dbReference type="PDBsum" id="4V87"/>
<dbReference type="PDBsum" id="4V8A"/>
<dbReference type="PDBsum" id="4V8B"/>
<dbReference type="PDBsum" id="4V8C"/>
<dbReference type="PDBsum" id="4V8D"/>
<dbReference type="PDBsum" id="4V8E"/>
<dbReference type="PDBsum" id="4V8F"/>
<dbReference type="PDBsum" id="4V8G"/>
<dbReference type="PDBsum" id="4V8H"/>
<dbReference type="PDBsum" id="4V8I"/>
<dbReference type="PDBsum" id="4V8J"/>
<dbReference type="PDBsum" id="4V8N"/>
<dbReference type="PDBsum" id="4V8O"/>
<dbReference type="PDBsum" id="4V8Q"/>
<dbReference type="PDBsum" id="4V8U"/>
<dbReference type="PDBsum" id="4V8X"/>
<dbReference type="PDBsum" id="4V90"/>
<dbReference type="PDBsum" id="4V95"/>
<dbReference type="PDBsum" id="4V97"/>
<dbReference type="PDBsum" id="4V9A"/>
<dbReference type="PDBsum" id="4V9B"/>
<dbReference type="PDBsum" id="4V9H"/>
<dbReference type="PDBsum" id="4V9I"/>
<dbReference type="PDBsum" id="4V9R"/>
<dbReference type="PDBsum" id="4V9S"/>
<dbReference type="PDBsum" id="4W2E"/>
<dbReference type="PDBsum" id="4W2F"/>
<dbReference type="PDBsum" id="4W2G"/>
<dbReference type="PDBsum" id="4W2H"/>
<dbReference type="PDBsum" id="4W2I"/>
<dbReference type="PDBsum" id="4W4G"/>
<dbReference type="PDBsum" id="4WPO"/>
<dbReference type="PDBsum" id="4WQ1"/>
<dbReference type="PDBsum" id="4WQF"/>
<dbReference type="PDBsum" id="4WQR"/>
<dbReference type="PDBsum" id="4WQU"/>
<dbReference type="PDBsum" id="4WQY"/>
<dbReference type="PDBsum" id="4WR6"/>
<dbReference type="PDBsum" id="4WRA"/>
<dbReference type="PDBsum" id="4WRO"/>
<dbReference type="PDBsum" id="4WSD"/>
<dbReference type="PDBsum" id="4WSM"/>
<dbReference type="PDBsum" id="4WT1"/>
<dbReference type="PDBsum" id="4WT8"/>
<dbReference type="PDBsum" id="4WU1"/>
<dbReference type="PDBsum" id="4WZD"/>
<dbReference type="PDBsum" id="4WZO"/>
<dbReference type="PDBsum" id="4Y4O"/>
<dbReference type="PDBsum" id="4Y4P"/>
<dbReference type="PDBsum" id="4YPB"/>
<dbReference type="PDBsum" id="4YZV"/>
<dbReference type="PDBsum" id="4Z3S"/>
<dbReference type="PDBsum" id="4Z8C"/>
<dbReference type="PDBsum" id="4ZER"/>
<dbReference type="PDBsum" id="4ZSN"/>
<dbReference type="PDBsum" id="5A9Z"/>
<dbReference type="PDBsum" id="5AA0"/>
<dbReference type="PDBsum" id="5CZP"/>
<dbReference type="PDBsum" id="5D8B"/>
<dbReference type="PDBsum" id="5DFE"/>
<dbReference type="PDBsum" id="5DOX"/>
<dbReference type="PDBsum" id="5DOY"/>
<dbReference type="PDBsum" id="5E7K"/>
<dbReference type="PDBsum" id="5E81"/>
<dbReference type="PDBsum" id="5EL4"/>
<dbReference type="PDBsum" id="5EL5"/>
<dbReference type="PDBsum" id="5EL6"/>
<dbReference type="PDBsum" id="5EL7"/>
<dbReference type="PDBsum" id="5F8K"/>
<dbReference type="PDBsum" id="5FDU"/>
<dbReference type="PDBsum" id="5FDV"/>
<dbReference type="PDBsum" id="5HAU"/>
<dbReference type="PDBsum" id="5HCP"/>
<dbReference type="PDBsum" id="5HCQ"/>
<dbReference type="PDBsum" id="5HCR"/>
<dbReference type="PDBsum" id="5HD1"/>
<dbReference type="PDBsum" id="5IB7"/>
<dbReference type="PDBsum" id="5IB8"/>
<dbReference type="PDBsum" id="5IBB"/>
<dbReference type="PDBsum" id="5IMQ"/>
<dbReference type="PDBsum" id="5IMR"/>
<dbReference type="PDBsum" id="5J30"/>
<dbReference type="PDBsum" id="5J3C"/>
<dbReference type="PDBsum" id="5J4B"/>
<dbReference type="PDBsum" id="5J4C"/>
<dbReference type="PDBsum" id="5J8B"/>
<dbReference type="PDBsum" id="5NDJ"/>
<dbReference type="PDBsum" id="5NDK"/>
<dbReference type="PDBsum" id="5OT7"/>
<dbReference type="PDBsum" id="5UQ7"/>
<dbReference type="PDBsum" id="5UQ8"/>
<dbReference type="PDBsum" id="5VP2"/>
<dbReference type="PDBsum" id="5VPO"/>
<dbReference type="PDBsum" id="5VPP"/>
<dbReference type="PDBsum" id="5W4K"/>
<dbReference type="PDBsum" id="5WIS"/>
<dbReference type="PDBsum" id="5WIT"/>
<dbReference type="PDBsum" id="5ZLU"/>
<dbReference type="PDBsum" id="6BUW"/>
<dbReference type="PDBsum" id="6BZ6"/>
<dbReference type="PDBsum" id="6BZ7"/>
<dbReference type="PDBsum" id="6BZ8"/>
<dbReference type="PDBsum" id="6C5L"/>
<dbReference type="PDBsum" id="6CAE"/>
<dbReference type="PDBsum" id="6CFJ"/>
<dbReference type="PDBsum" id="6CFK"/>
<dbReference type="PDBsum" id="6CFL"/>
<dbReference type="PDBsum" id="6CZR"/>
<dbReference type="PDBsum" id="6FKR"/>
<dbReference type="PDBsum" id="6GSJ"/>
<dbReference type="PDBsum" id="6GSK"/>
<dbReference type="PDBsum" id="6GSL"/>
<dbReference type="PDBsum" id="6GZQ"/>
<dbReference type="PDBsum" id="6GZX"/>
<dbReference type="PDBsum" id="6GZZ"/>
<dbReference type="PDBsum" id="6N9E"/>
<dbReference type="PDBsum" id="6N9F"/>
<dbReference type="PDBsum" id="6ND5"/>
<dbReference type="PDBsum" id="6ND6"/>
<dbReference type="PDBsum" id="6NDK"/>
<dbReference type="PDBsum" id="6NSH"/>
<dbReference type="PDBsum" id="6NTA"/>
<dbReference type="PDBsum" id="6NUO"/>
<dbReference type="PDBsum" id="6NWY"/>
<dbReference type="PDBsum" id="6O3M"/>
<dbReference type="PDBsum" id="6O97"/>
<dbReference type="PDBsum" id="6OF1"/>
<dbReference type="PDBsum" id="6OF6"/>
<dbReference type="PDBsum" id="6OJ2"/>
<dbReference type="PDBsum" id="6OPE"/>
<dbReference type="PDBsum" id="6ORD"/>
<dbReference type="PDBsum" id="6OSI"/>
<dbReference type="PDBsum" id="6OTR"/>
<dbReference type="PDBsum" id="6OXA"/>
<dbReference type="PDBsum" id="6OXI"/>
<dbReference type="PDBsum" id="6Q95"/>
<dbReference type="PDBsum" id="6QNQ"/>
<dbReference type="PDBsum" id="6QNR"/>
<dbReference type="PDBsum" id="6UCQ"/>
<dbReference type="PDBsum" id="6UO1"/>
<dbReference type="PDBsum" id="6XHV"/>
<dbReference type="PDBsum" id="6XHW"/>
<dbReference type="PDBsum" id="6XHX"/>
<dbReference type="PDBsum" id="6XHY"/>
<dbReference type="PDBsum" id="6XQD"/>
<dbReference type="PDBsum" id="6XQE"/>
<dbReference type="PDBsum" id="7AZO"/>
<dbReference type="PDBsum" id="7AZS"/>
<dbReference type="PDBsum" id="7JQL"/>
<dbReference type="PDBsum" id="7JQM"/>
<dbReference type="PDBsum" id="7LH5"/>
<dbReference type="PDBsum" id="7MD7"/>
<dbReference type="PDBsum" id="7RQ8"/>
<dbReference type="PDBsum" id="7RQ9"/>
<dbReference type="PDBsum" id="7RQA"/>
<dbReference type="PDBsum" id="7RQB"/>
<dbReference type="PDBsum" id="7RQC"/>
<dbReference type="PDBsum" id="7RQD"/>
<dbReference type="PDBsum" id="7RQE"/>
<dbReference type="PDBsum" id="7U2H"/>
<dbReference type="PDBsum" id="7U2I"/>
<dbReference type="PDBsum" id="7U2J"/>
<dbReference type="PDBsum" id="8CVJ"/>
<dbReference type="PDBsum" id="8CVK"/>
<dbReference type="PDBsum" id="8CVL"/>
<dbReference type="PDBsum" id="8EKB"/>
<dbReference type="PDBsum" id="8EV6"/>
<dbReference type="PDBsum" id="8EV7"/>
<dbReference type="PDBsum" id="8FC1"/>
<dbReference type="PDBsum" id="8FC2"/>
<dbReference type="PDBsum" id="8FC3"/>
<dbReference type="PDBsum" id="8FC4"/>
<dbReference type="PDBsum" id="8FC5"/>
<dbReference type="PDBsum" id="8FC6"/>
<dbReference type="PDBsum" id="8FOM"/>
<dbReference type="PDBsum" id="8FON"/>
<dbReference type="PDBsum" id="8G29"/>
<dbReference type="PDBsum" id="8G2A"/>
<dbReference type="PDBsum" id="8G2B"/>
<dbReference type="PDBsum" id="8G2C"/>
<dbReference type="PDBsum" id="8G2D"/>
<dbReference type="PDBsum" id="8T8B"/>
<dbReference type="PDBsum" id="8T8C"/>
<dbReference type="PDBsum" id="8UD6"/>
<dbReference type="PDBsum" id="8UD7"/>
<dbReference type="PDBsum" id="8UD8"/>
<dbReference type="PDBsum" id="8UVR"/>
<dbReference type="PDBsum" id="8UVS"/>
<dbReference type="PDBsum" id="8VTU"/>
<dbReference type="PDBsum" id="8VTV"/>
<dbReference type="PDBsum" id="8VTW"/>
<dbReference type="PDBsum" id="8VTX"/>
<dbReference type="PDBsum" id="8VTY"/>
<dbReference type="PDBsum" id="8WV1"/>
<dbReference type="PDBsum" id="9B00"/>
<dbReference type="PDBsum" id="9D0J"/>
<dbReference type="PDBsum" id="9D7R"/>
<dbReference type="PDBsum" id="9D7S"/>
<dbReference type="PDBsum" id="9D7T"/>
<dbReference type="PDBsum" id="9DFC"/>
<dbReference type="PDBsum" id="9DFD"/>
<dbReference type="PDBsum" id="9DFE"/>
<dbReference type="EMDB" id="EMD-0101"/>
<dbReference type="EMDB" id="EMD-0104"/>
<dbReference type="EMDB" id="EMD-0105"/>
<dbReference type="EMDB" id="EMD-3852"/>
<dbReference type="EMDB" id="EMD-4475"/>
<dbReference type="EMDB" id="EMD-6934"/>
<dbReference type="EMDB" id="EMD-8596"/>
<dbReference type="EMDB" id="EMD-8597"/>
<dbReference type="SMR" id="Q5SHP3"/>
<dbReference type="IntAct" id="Q5SHP3">
    <property type="interactions" value="8"/>
</dbReference>
<dbReference type="EnsemblBacteria" id="BAD71510">
    <property type="protein sequence ID" value="BAD71510"/>
    <property type="gene ID" value="BAD71510"/>
</dbReference>
<dbReference type="GeneID" id="3169835"/>
<dbReference type="KEGG" id="ttj:TTHA1687"/>
<dbReference type="PATRIC" id="fig|300852.9.peg.1657"/>
<dbReference type="eggNOG" id="COG0091">
    <property type="taxonomic scope" value="Bacteria"/>
</dbReference>
<dbReference type="HOGENOM" id="CLU_083987_3_1_0"/>
<dbReference type="PhylomeDB" id="Q5SHP3"/>
<dbReference type="EvolutionaryTrace" id="Q5SHP3"/>
<dbReference type="Proteomes" id="UP000000532">
    <property type="component" value="Chromosome"/>
</dbReference>
<dbReference type="GO" id="GO:0022625">
    <property type="term" value="C:cytosolic large ribosomal subunit"/>
    <property type="evidence" value="ECO:0007669"/>
    <property type="project" value="TreeGrafter"/>
</dbReference>
<dbReference type="GO" id="GO:0019843">
    <property type="term" value="F:rRNA binding"/>
    <property type="evidence" value="ECO:0007669"/>
    <property type="project" value="UniProtKB-UniRule"/>
</dbReference>
<dbReference type="GO" id="GO:0003735">
    <property type="term" value="F:structural constituent of ribosome"/>
    <property type="evidence" value="ECO:0007669"/>
    <property type="project" value="InterPro"/>
</dbReference>
<dbReference type="GO" id="GO:0006412">
    <property type="term" value="P:translation"/>
    <property type="evidence" value="ECO:0007669"/>
    <property type="project" value="UniProtKB-UniRule"/>
</dbReference>
<dbReference type="CDD" id="cd00336">
    <property type="entry name" value="Ribosomal_L22"/>
    <property type="match status" value="1"/>
</dbReference>
<dbReference type="FunFam" id="3.90.470.10:FF:000011">
    <property type="entry name" value="50S ribosomal protein L22"/>
    <property type="match status" value="1"/>
</dbReference>
<dbReference type="Gene3D" id="3.90.470.10">
    <property type="entry name" value="Ribosomal protein L22/L17"/>
    <property type="match status" value="1"/>
</dbReference>
<dbReference type="HAMAP" id="MF_01331_B">
    <property type="entry name" value="Ribosomal_uL22_B"/>
    <property type="match status" value="1"/>
</dbReference>
<dbReference type="InterPro" id="IPR001063">
    <property type="entry name" value="Ribosomal_uL22"/>
</dbReference>
<dbReference type="InterPro" id="IPR005727">
    <property type="entry name" value="Ribosomal_uL22_bac/chlpt-type"/>
</dbReference>
<dbReference type="InterPro" id="IPR047867">
    <property type="entry name" value="Ribosomal_uL22_bac/org-type"/>
</dbReference>
<dbReference type="InterPro" id="IPR018260">
    <property type="entry name" value="Ribosomal_uL22_CS"/>
</dbReference>
<dbReference type="InterPro" id="IPR036394">
    <property type="entry name" value="Ribosomal_uL22_sf"/>
</dbReference>
<dbReference type="NCBIfam" id="TIGR01044">
    <property type="entry name" value="rplV_bact"/>
    <property type="match status" value="1"/>
</dbReference>
<dbReference type="PANTHER" id="PTHR13501">
    <property type="entry name" value="CHLOROPLAST 50S RIBOSOMAL PROTEIN L22-RELATED"/>
    <property type="match status" value="1"/>
</dbReference>
<dbReference type="PANTHER" id="PTHR13501:SF8">
    <property type="entry name" value="LARGE RIBOSOMAL SUBUNIT PROTEIN UL22M"/>
    <property type="match status" value="1"/>
</dbReference>
<dbReference type="Pfam" id="PF00237">
    <property type="entry name" value="Ribosomal_L22"/>
    <property type="match status" value="1"/>
</dbReference>
<dbReference type="SUPFAM" id="SSF54843">
    <property type="entry name" value="Ribosomal protein L22"/>
    <property type="match status" value="1"/>
</dbReference>
<dbReference type="PROSITE" id="PS00464">
    <property type="entry name" value="RIBOSOMAL_L22"/>
    <property type="match status" value="1"/>
</dbReference>
<gene>
    <name type="primary">rplV</name>
    <name type="ordered locus">TTHA1687</name>
</gene>
<feature type="chain" id="PRO_0000125249" description="Large ribosomal subunit protein uL22">
    <location>
        <begin position="1"/>
        <end position="113"/>
    </location>
</feature>
<feature type="helix" evidence="4">
    <location>
        <begin position="14"/>
        <end position="24"/>
    </location>
</feature>
<feature type="helix" evidence="4">
    <location>
        <begin position="29"/>
        <end position="38"/>
    </location>
</feature>
<feature type="helix" evidence="4">
    <location>
        <begin position="43"/>
        <end position="62"/>
    </location>
</feature>
<feature type="helix" evidence="4">
    <location>
        <begin position="66"/>
        <end position="68"/>
    </location>
</feature>
<feature type="strand" evidence="4">
    <location>
        <begin position="69"/>
        <end position="78"/>
    </location>
</feature>
<feature type="strand" evidence="4">
    <location>
        <begin position="82"/>
        <end position="86"/>
    </location>
</feature>
<feature type="turn" evidence="4">
    <location>
        <begin position="89"/>
        <end position="91"/>
    </location>
</feature>
<feature type="strand" evidence="4">
    <location>
        <begin position="94"/>
        <end position="98"/>
    </location>
</feature>
<feature type="strand" evidence="4">
    <location>
        <begin position="101"/>
        <end position="109"/>
    </location>
</feature>
<proteinExistence type="evidence at protein level"/>
<evidence type="ECO:0000250" key="1"/>
<evidence type="ECO:0000269" key="2">
    <source>
    </source>
</evidence>
<evidence type="ECO:0000305" key="3"/>
<evidence type="ECO:0007829" key="4">
    <source>
        <dbReference type="PDB" id="4WT8"/>
    </source>
</evidence>
<reference key="1">
    <citation type="submission" date="2004-11" db="EMBL/GenBank/DDBJ databases">
        <title>Complete genome sequence of Thermus thermophilus HB8.</title>
        <authorList>
            <person name="Masui R."/>
            <person name="Kurokawa K."/>
            <person name="Nakagawa N."/>
            <person name="Tokunaga F."/>
            <person name="Koyama Y."/>
            <person name="Shibata T."/>
            <person name="Oshima T."/>
            <person name="Yokoyama S."/>
            <person name="Yasunaga T."/>
            <person name="Kuramitsu S."/>
        </authorList>
    </citation>
    <scope>NUCLEOTIDE SEQUENCE [LARGE SCALE GENOMIC DNA]</scope>
    <source>
        <strain>ATCC 27634 / DSM 579 / HB8</strain>
    </source>
</reference>
<reference key="2">
    <citation type="journal article" date="2000" name="Biol. Chem.">
        <title>Identification of the 50S ribosomal proteins from the eubacterium Thermus thermophilus.</title>
        <authorList>
            <person name="Katsani K.R."/>
            <person name="Tsiboli P."/>
            <person name="Anagnostopoulos K."/>
            <person name="Urlaub H."/>
            <person name="Choli-Papadopoulou T."/>
        </authorList>
    </citation>
    <scope>PROTEIN SEQUENCE OF 1-20</scope>
    <source>
        <strain>ATCC 27634 / DSM 579 / HB8</strain>
    </source>
</reference>
<reference key="3">
    <citation type="journal article" date="2005" name="Proteomics">
        <title>Extending ribosomal protein identifications to unsequenced bacterial strains using matrix-assisted laser desorption/ionization mass spectrometry.</title>
        <authorList>
            <person name="Suh M.-J."/>
            <person name="Hamburg D.M."/>
            <person name="Gregory S.T."/>
            <person name="Dahlberg A.E."/>
            <person name="Limbach P.A."/>
        </authorList>
    </citation>
    <scope>MASS SPECTROMETRY</scope>
    <source>
        <strain>ATCC 27634 / DSM 579 / HB8</strain>
    </source>
</reference>
<reference key="4">
    <citation type="journal article" date="2001" name="Cell">
        <title>The path of messenger RNA through the ribosome.</title>
        <authorList>
            <person name="Yusupova G.Z."/>
            <person name="Yusupov M.M."/>
            <person name="Cate J.H.D."/>
            <person name="Noller H.F."/>
        </authorList>
    </citation>
    <scope>X-RAY CRYSTALLOGRAPHY (5.0 ANGSTROMS) OF THE RIBOSOME</scope>
</reference>
<reference key="5">
    <citation type="journal article" date="2001" name="Science">
        <title>Crystal structure of the ribosome at 5.5 A resolution.</title>
        <authorList>
            <person name="Yusupov M.M."/>
            <person name="Yusupova G.Z."/>
            <person name="Baucom A."/>
            <person name="Lieberman K."/>
            <person name="Earnest T.N."/>
            <person name="Cate J.H.D."/>
            <person name="Noller H.F."/>
        </authorList>
    </citation>
    <scope>X-RAY CRYSTALLOGRAPHY (5.5 ANGSTROMS) OF THE RIBOSOME</scope>
</reference>
<reference key="6">
    <citation type="journal article" date="2005" name="Cell">
        <title>Crystal structures of the ribosome in complex with release factors RF1 and RF2 bound to a cognate stop codon.</title>
        <authorList>
            <person name="Petry S."/>
            <person name="Brodersen D.E."/>
            <person name="Murphy F.V."/>
            <person name="Dunham C.M."/>
            <person name="Selmer M."/>
            <person name="Tarry M.J."/>
            <person name="Kelley A.C."/>
            <person name="Ramakrishnan V."/>
        </authorList>
    </citation>
    <scope>X-RAY CRYSTALLOGRAPHY (5.90 ANGSTROMS) OF 70S RIBOSOME IN COMPLEX WITH RF1 OR RF2</scope>
    <scope>SUBUNIT</scope>
</reference>
<reference key="7">
    <citation type="journal article" date="2008" name="Science">
        <title>Insights into translational termination from the structure of RF2 bound to the ribosome.</title>
        <authorList>
            <person name="Weixlbaumer A."/>
            <person name="Jin H."/>
            <person name="Neubauer C."/>
            <person name="Voorhees R.M."/>
            <person name="Petry S."/>
            <person name="Kelley A.C."/>
            <person name="Ramakrishnan V."/>
        </authorList>
    </citation>
    <scope>X-RAY CRYSTALLOGRAPHY (3.45 ANGSTROMS) OF 70S RIBOSOME IN COMPLEX WITH RF2</scope>
    <scope>SUBUNIT</scope>
</reference>
<reference key="8">
    <citation type="journal article" date="2010" name="Proc. Natl. Acad. Sci. U.S.A.">
        <title>Structure of the 70S ribosome bound to release factor 2 and a substrate analog provides insights into catalysis of peptide release.</title>
        <authorList>
            <person name="Jin H."/>
            <person name="Kelley A.C."/>
            <person name="Loakes D."/>
            <person name="Ramakrishnan V."/>
        </authorList>
    </citation>
    <scope>X-RAY CRYSTALLOGRAPHY (3.10 ANGSTROMS) OF 70S RIBOSOME IN COMPLEX WITH RF2</scope>
    <scope>SUBUNIT</scope>
</reference>